<organism>
    <name type="scientific">Saccharomyces cerevisiae (strain ATCC 204508 / S288c)</name>
    <name type="common">Baker's yeast</name>
    <dbReference type="NCBI Taxonomy" id="559292"/>
    <lineage>
        <taxon>Eukaryota</taxon>
        <taxon>Fungi</taxon>
        <taxon>Dikarya</taxon>
        <taxon>Ascomycota</taxon>
        <taxon>Saccharomycotina</taxon>
        <taxon>Saccharomycetes</taxon>
        <taxon>Saccharomycetales</taxon>
        <taxon>Saccharomycetaceae</taxon>
        <taxon>Saccharomyces</taxon>
    </lineage>
</organism>
<keyword id="KW-0597">Phosphoprotein</keyword>
<keyword id="KW-1185">Reference proteome</keyword>
<protein>
    <recommendedName>
        <fullName>Uncharacterized protein YGR237C</fullName>
    </recommendedName>
</protein>
<proteinExistence type="evidence at protein level"/>
<gene>
    <name type="ordered locus">YGR237C</name>
    <name type="ORF">G8581</name>
</gene>
<dbReference type="EMBL" id="X87941">
    <property type="protein sequence ID" value="CAA61187.1"/>
    <property type="molecule type" value="Genomic_DNA"/>
</dbReference>
<dbReference type="EMBL" id="Z73022">
    <property type="protein sequence ID" value="CAA97265.1"/>
    <property type="molecule type" value="Genomic_DNA"/>
</dbReference>
<dbReference type="EMBL" id="BK006941">
    <property type="protein sequence ID" value="DAA08328.1"/>
    <property type="molecule type" value="Genomic_DNA"/>
</dbReference>
<dbReference type="PIR" id="S57702">
    <property type="entry name" value="S57702"/>
</dbReference>
<dbReference type="RefSeq" id="NP_011753.1">
    <property type="nucleotide sequence ID" value="NM_001181366.1"/>
</dbReference>
<dbReference type="BioGRID" id="33489">
    <property type="interactions" value="169"/>
</dbReference>
<dbReference type="DIP" id="DIP-3933N"/>
<dbReference type="FunCoup" id="P50089">
    <property type="interactions" value="146"/>
</dbReference>
<dbReference type="IntAct" id="P50089">
    <property type="interactions" value="16"/>
</dbReference>
<dbReference type="MINT" id="P50089"/>
<dbReference type="STRING" id="4932.YGR237C"/>
<dbReference type="GlyGen" id="P50089">
    <property type="glycosylation" value="1 site, 1 O-linked glycan (1 site)"/>
</dbReference>
<dbReference type="iPTMnet" id="P50089"/>
<dbReference type="PaxDb" id="4932-YGR237C"/>
<dbReference type="PeptideAtlas" id="P50089"/>
<dbReference type="EnsemblFungi" id="YGR237C_mRNA">
    <property type="protein sequence ID" value="YGR237C"/>
    <property type="gene ID" value="YGR237C"/>
</dbReference>
<dbReference type="GeneID" id="853152"/>
<dbReference type="KEGG" id="sce:YGR237C"/>
<dbReference type="AGR" id="SGD:S000003469"/>
<dbReference type="SGD" id="S000003469">
    <property type="gene designation" value="YGR237C"/>
</dbReference>
<dbReference type="VEuPathDB" id="FungiDB:YGR237C"/>
<dbReference type="eggNOG" id="ENOG502QSA6">
    <property type="taxonomic scope" value="Eukaryota"/>
</dbReference>
<dbReference type="HOGENOM" id="CLU_014122_0_0_1"/>
<dbReference type="InParanoid" id="P50089"/>
<dbReference type="OMA" id="WSSVDWY"/>
<dbReference type="OrthoDB" id="4068467at2759"/>
<dbReference type="BioCyc" id="YEAST:G3O-30915-MONOMER"/>
<dbReference type="BioGRID-ORCS" id="853152">
    <property type="hits" value="2 hits in 10 CRISPR screens"/>
</dbReference>
<dbReference type="PRO" id="PR:P50089"/>
<dbReference type="Proteomes" id="UP000002311">
    <property type="component" value="Chromosome VII"/>
</dbReference>
<dbReference type="RNAct" id="P50089">
    <property type="molecule type" value="protein"/>
</dbReference>
<dbReference type="GO" id="GO:0005737">
    <property type="term" value="C:cytoplasm"/>
    <property type="evidence" value="ECO:0007005"/>
    <property type="project" value="SGD"/>
</dbReference>
<accession>P50089</accession>
<accession>D6VV17</accession>
<feature type="chain" id="PRO_0000202854" description="Uncharacterized protein YGR237C">
    <location>
        <begin position="1"/>
        <end position="785"/>
    </location>
</feature>
<feature type="region of interest" description="Disordered" evidence="1">
    <location>
        <begin position="53"/>
        <end position="162"/>
    </location>
</feature>
<feature type="region of interest" description="Disordered" evidence="1">
    <location>
        <begin position="571"/>
        <end position="590"/>
    </location>
</feature>
<feature type="region of interest" description="Disordered" evidence="1">
    <location>
        <begin position="631"/>
        <end position="657"/>
    </location>
</feature>
<feature type="region of interest" description="Disordered" evidence="1">
    <location>
        <begin position="693"/>
        <end position="785"/>
    </location>
</feature>
<feature type="compositionally biased region" description="Polar residues" evidence="1">
    <location>
        <begin position="53"/>
        <end position="65"/>
    </location>
</feature>
<feature type="compositionally biased region" description="Acidic residues" evidence="1">
    <location>
        <begin position="66"/>
        <end position="79"/>
    </location>
</feature>
<feature type="compositionally biased region" description="Polar residues" evidence="1">
    <location>
        <begin position="81"/>
        <end position="94"/>
    </location>
</feature>
<feature type="compositionally biased region" description="Acidic residues" evidence="1">
    <location>
        <begin position="575"/>
        <end position="584"/>
    </location>
</feature>
<feature type="compositionally biased region" description="Basic residues" evidence="1">
    <location>
        <begin position="725"/>
        <end position="739"/>
    </location>
</feature>
<feature type="compositionally biased region" description="Low complexity" evidence="1">
    <location>
        <begin position="776"/>
        <end position="785"/>
    </location>
</feature>
<feature type="modified residue" description="Phosphoserine" evidence="4">
    <location>
        <position position="215"/>
    </location>
</feature>
<feature type="modified residue" description="Phosphoserine" evidence="3 4">
    <location>
        <position position="667"/>
    </location>
</feature>
<sequence length="785" mass="89241">MSSAKTFTKHISFDDLAPSLIDDQATIIKNDSHHVGLNNHFLHIPPQFNPVYKNTLTGSHGSNDLATDESLDSPEDEEASSPLQLGTPTSTTSGVPHFYTQVFSPAAHDPSKSYLRSPSVERSRSESPMFRSRRRTSVRLPPPPKVSVLKKSRKAADEQGPIDDIDIGDLDFELERKMTKMTERNTQKNSGSRKGYTQAAFANLNEVEDRIETKSMVDLSESENMESSKKRSKSFAGMTDEELAKLEEFYISKGRSNKTKIDQFDFGEQVPVYLNTTESKTDSSNVTDPLAAIYPSRPTIVHNAISMTIDHPDYENYISNTKEKLNCKDKDDDVDLRVVSCYISGRRYTWSSVDWYVENLTRNGDHLVIITTIPEFEAKIDTLAYKEKRRHRLERMTSNTSESMTTASHSLIGPDLSSPLSTGIRIEAIHNEAKQTCSDILNYYARRLATKIVRISIEMVKENSTRSAIISATSLYRPSLQVISTVSANIQIKFRNGKVKLPFFLMKHFAMPAFVVPFEFIKPELLIKPRVDKDEQDNSDDLKTEVRKKERLQWLSALIRRTLENPFTKHKVVDSDDEESDSDESVTSVNEYFPISPEKKEEMEFFDKMGYVRPKPSRQVLLDDNTLMKYDSSGRKLTPIESRNSRRSSKRSSRIQFNNNGIYKVKSMVDDIYNHETASTPHIKTALKWDNEDPKMKFTSHPMRKTKSAGLSPRTSSTSSSSGQRKAHHHHHHHNHVSRTKTTESTKSGNSKKDSSSSSTNDHQFKRSEKKKKSKFGSIFKKVFG</sequence>
<comment type="miscellaneous">
    <text evidence="2">Present with 1050 molecules/cell in log phase SD medium.</text>
</comment>
<evidence type="ECO:0000256" key="1">
    <source>
        <dbReference type="SAM" id="MobiDB-lite"/>
    </source>
</evidence>
<evidence type="ECO:0000269" key="2">
    <source>
    </source>
</evidence>
<evidence type="ECO:0007744" key="3">
    <source>
    </source>
</evidence>
<evidence type="ECO:0007744" key="4">
    <source>
    </source>
</evidence>
<name>YG51_YEAST</name>
<reference key="1">
    <citation type="journal article" date="1996" name="Yeast">
        <title>Sequence analysis of the 43 kb CRM1-YLM9-PET54-DIE2-SMI1-PHO81-YHB4-PFK1 region from the right arm of Saccharomyces cerevisiae chromosome VII.</title>
        <authorList>
            <person name="van der Aart Q.J.M."/>
            <person name="Kleine K."/>
            <person name="Steensma H.Y."/>
        </authorList>
    </citation>
    <scope>NUCLEOTIDE SEQUENCE [GENOMIC DNA]</scope>
    <source>
        <strain>ATCC 204508 / S288c</strain>
    </source>
</reference>
<reference key="2">
    <citation type="journal article" date="1997" name="Nature">
        <title>The nucleotide sequence of Saccharomyces cerevisiae chromosome VII.</title>
        <authorList>
            <person name="Tettelin H."/>
            <person name="Agostoni-Carbone M.L."/>
            <person name="Albermann K."/>
            <person name="Albers M."/>
            <person name="Arroyo J."/>
            <person name="Backes U."/>
            <person name="Barreiros T."/>
            <person name="Bertani I."/>
            <person name="Bjourson A.J."/>
            <person name="Brueckner M."/>
            <person name="Bruschi C.V."/>
            <person name="Carignani G."/>
            <person name="Castagnoli L."/>
            <person name="Cerdan E."/>
            <person name="Clemente M.L."/>
            <person name="Coblenz A."/>
            <person name="Coglievina M."/>
            <person name="Coissac E."/>
            <person name="Defoor E."/>
            <person name="Del Bino S."/>
            <person name="Delius H."/>
            <person name="Delneri D."/>
            <person name="de Wergifosse P."/>
            <person name="Dujon B."/>
            <person name="Durand P."/>
            <person name="Entian K.-D."/>
            <person name="Eraso P."/>
            <person name="Escribano V."/>
            <person name="Fabiani L."/>
            <person name="Fartmann B."/>
            <person name="Feroli F."/>
            <person name="Feuermann M."/>
            <person name="Frontali L."/>
            <person name="Garcia-Gonzalez M."/>
            <person name="Garcia-Saez M.I."/>
            <person name="Goffeau A."/>
            <person name="Guerreiro P."/>
            <person name="Hani J."/>
            <person name="Hansen M."/>
            <person name="Hebling U."/>
            <person name="Hernandez K."/>
            <person name="Heumann K."/>
            <person name="Hilger F."/>
            <person name="Hofmann B."/>
            <person name="Indge K.J."/>
            <person name="James C.M."/>
            <person name="Klima R."/>
            <person name="Koetter P."/>
            <person name="Kramer B."/>
            <person name="Kramer W."/>
            <person name="Lauquin G."/>
            <person name="Leuther H."/>
            <person name="Louis E.J."/>
            <person name="Maillier E."/>
            <person name="Marconi A."/>
            <person name="Martegani E."/>
            <person name="Mazon M.J."/>
            <person name="Mazzoni C."/>
            <person name="McReynolds A.D.K."/>
            <person name="Melchioretto P."/>
            <person name="Mewes H.-W."/>
            <person name="Minenkova O."/>
            <person name="Mueller-Auer S."/>
            <person name="Nawrocki A."/>
            <person name="Netter P."/>
            <person name="Neu R."/>
            <person name="Nombela C."/>
            <person name="Oliver S.G."/>
            <person name="Panzeri L."/>
            <person name="Paoluzi S."/>
            <person name="Plevani P."/>
            <person name="Portetelle D."/>
            <person name="Portillo F."/>
            <person name="Potier S."/>
            <person name="Purnelle B."/>
            <person name="Rieger M."/>
            <person name="Riles L."/>
            <person name="Rinaldi T."/>
            <person name="Robben J."/>
            <person name="Rodrigues-Pousada C."/>
            <person name="Rodriguez-Belmonte E."/>
            <person name="Rodriguez-Torres A.M."/>
            <person name="Rose M."/>
            <person name="Ruzzi M."/>
            <person name="Saliola M."/>
            <person name="Sanchez-Perez M."/>
            <person name="Schaefer B."/>
            <person name="Schaefer M."/>
            <person name="Scharfe M."/>
            <person name="Schmidheini T."/>
            <person name="Schreer A."/>
            <person name="Skala J."/>
            <person name="Souciet J.-L."/>
            <person name="Steensma H.Y."/>
            <person name="Talla E."/>
            <person name="Thierry A."/>
            <person name="Vandenbol M."/>
            <person name="van der Aart Q.J.M."/>
            <person name="Van Dyck L."/>
            <person name="Vanoni M."/>
            <person name="Verhasselt P."/>
            <person name="Voet M."/>
            <person name="Volckaert G."/>
            <person name="Wambutt R."/>
            <person name="Watson M.D."/>
            <person name="Weber N."/>
            <person name="Wedler E."/>
            <person name="Wedler H."/>
            <person name="Wipfli P."/>
            <person name="Wolf K."/>
            <person name="Wright L.F."/>
            <person name="Zaccaria P."/>
            <person name="Zimmermann M."/>
            <person name="Zollner A."/>
            <person name="Kleine K."/>
        </authorList>
    </citation>
    <scope>NUCLEOTIDE SEQUENCE [LARGE SCALE GENOMIC DNA]</scope>
    <source>
        <strain>ATCC 204508 / S288c</strain>
    </source>
</reference>
<reference key="3">
    <citation type="journal article" date="2014" name="G3 (Bethesda)">
        <title>The reference genome sequence of Saccharomyces cerevisiae: Then and now.</title>
        <authorList>
            <person name="Engel S.R."/>
            <person name="Dietrich F.S."/>
            <person name="Fisk D.G."/>
            <person name="Binkley G."/>
            <person name="Balakrishnan R."/>
            <person name="Costanzo M.C."/>
            <person name="Dwight S.S."/>
            <person name="Hitz B.C."/>
            <person name="Karra K."/>
            <person name="Nash R.S."/>
            <person name="Weng S."/>
            <person name="Wong E.D."/>
            <person name="Lloyd P."/>
            <person name="Skrzypek M.S."/>
            <person name="Miyasato S.R."/>
            <person name="Simison M."/>
            <person name="Cherry J.M."/>
        </authorList>
    </citation>
    <scope>GENOME REANNOTATION</scope>
    <source>
        <strain>ATCC 204508 / S288c</strain>
    </source>
</reference>
<reference key="4">
    <citation type="journal article" date="2003" name="Nature">
        <title>Global analysis of protein expression in yeast.</title>
        <authorList>
            <person name="Ghaemmaghami S."/>
            <person name="Huh W.-K."/>
            <person name="Bower K."/>
            <person name="Howson R.W."/>
            <person name="Belle A."/>
            <person name="Dephoure N."/>
            <person name="O'Shea E.K."/>
            <person name="Weissman J.S."/>
        </authorList>
    </citation>
    <scope>LEVEL OF PROTEIN EXPRESSION [LARGE SCALE ANALYSIS]</scope>
</reference>
<reference key="5">
    <citation type="journal article" date="2007" name="J. Proteome Res.">
        <title>Large-scale phosphorylation analysis of alpha-factor-arrested Saccharomyces cerevisiae.</title>
        <authorList>
            <person name="Li X."/>
            <person name="Gerber S.A."/>
            <person name="Rudner A.D."/>
            <person name="Beausoleil S.A."/>
            <person name="Haas W."/>
            <person name="Villen J."/>
            <person name="Elias J.E."/>
            <person name="Gygi S.P."/>
        </authorList>
    </citation>
    <scope>PHOSPHORYLATION [LARGE SCALE ANALYSIS] AT SER-667</scope>
    <scope>IDENTIFICATION BY MASS SPECTROMETRY [LARGE SCALE ANALYSIS]</scope>
    <source>
        <strain>ADR376</strain>
    </source>
</reference>
<reference key="6">
    <citation type="journal article" date="2009" name="Science">
        <title>Global analysis of Cdk1 substrate phosphorylation sites provides insights into evolution.</title>
        <authorList>
            <person name="Holt L.J."/>
            <person name="Tuch B.B."/>
            <person name="Villen J."/>
            <person name="Johnson A.D."/>
            <person name="Gygi S.P."/>
            <person name="Morgan D.O."/>
        </authorList>
    </citation>
    <scope>PHOSPHORYLATION [LARGE SCALE ANALYSIS] AT SER-215 AND SER-667</scope>
    <scope>IDENTIFICATION BY MASS SPECTROMETRY [LARGE SCALE ANALYSIS]</scope>
</reference>